<evidence type="ECO:0000255" key="1"/>
<evidence type="ECO:0000256" key="2">
    <source>
        <dbReference type="SAM" id="MobiDB-lite"/>
    </source>
</evidence>
<evidence type="ECO:0000305" key="3"/>
<proteinExistence type="evidence at protein level"/>
<name>NP1L5_MOUSE</name>
<reference key="1">
    <citation type="submission" date="2000-04" db="EMBL/GenBank/DDBJ databases">
        <title>Isolation of full-length cDNA clones from mouse brain cDNA library made by oligo-capping method.</title>
        <authorList>
            <person name="Osada N."/>
            <person name="Kusuda J."/>
            <person name="Tanuma R."/>
            <person name="Ito A."/>
            <person name="Hirata M."/>
            <person name="Sugano S."/>
            <person name="Hashimoto K."/>
        </authorList>
    </citation>
    <scope>NUCLEOTIDE SEQUENCE [LARGE SCALE MRNA]</scope>
    <source>
        <strain>C57BL/6J</strain>
        <tissue>Brain</tissue>
    </source>
</reference>
<reference key="2">
    <citation type="journal article" date="2004" name="Genome Res.">
        <title>The status, quality, and expansion of the NIH full-length cDNA project: the Mammalian Gene Collection (MGC).</title>
        <authorList>
            <consortium name="The MGC Project Team"/>
        </authorList>
    </citation>
    <scope>NUCLEOTIDE SEQUENCE [LARGE SCALE MRNA]</scope>
    <source>
        <tissue>Eye</tissue>
    </source>
</reference>
<reference key="3">
    <citation type="journal article" date="2010" name="Cell">
        <title>A tissue-specific atlas of mouse protein phosphorylation and expression.</title>
        <authorList>
            <person name="Huttlin E.L."/>
            <person name="Jedrychowski M.P."/>
            <person name="Elias J.E."/>
            <person name="Goswami T."/>
            <person name="Rad R."/>
            <person name="Beausoleil S.A."/>
            <person name="Villen J."/>
            <person name="Haas W."/>
            <person name="Sowa M.E."/>
            <person name="Gygi S.P."/>
        </authorList>
    </citation>
    <scope>IDENTIFICATION BY MASS SPECTROMETRY [LARGE SCALE ANALYSIS]</scope>
    <source>
        <tissue>Brain</tissue>
    </source>
</reference>
<protein>
    <recommendedName>
        <fullName>Nucleosome assembly protein 1-like 5</fullName>
    </recommendedName>
</protein>
<accession>Q9JJF0</accession>
<comment type="subcellular location">
    <subcellularLocation>
        <location evidence="3">Nucleus</location>
    </subcellularLocation>
</comment>
<comment type="similarity">
    <text evidence="3">Belongs to the nucleosome assembly protein (NAP) family.</text>
</comment>
<keyword id="KW-0175">Coiled coil</keyword>
<keyword id="KW-0539">Nucleus</keyword>
<keyword id="KW-1185">Reference proteome</keyword>
<gene>
    <name type="primary">Nap1l5</name>
    <name type="ORF">MNCb-0385</name>
</gene>
<organism>
    <name type="scientific">Mus musculus</name>
    <name type="common">Mouse</name>
    <dbReference type="NCBI Taxonomy" id="10090"/>
    <lineage>
        <taxon>Eukaryota</taxon>
        <taxon>Metazoa</taxon>
        <taxon>Chordata</taxon>
        <taxon>Craniata</taxon>
        <taxon>Vertebrata</taxon>
        <taxon>Euteleostomi</taxon>
        <taxon>Mammalia</taxon>
        <taxon>Eutheria</taxon>
        <taxon>Euarchontoglires</taxon>
        <taxon>Glires</taxon>
        <taxon>Rodentia</taxon>
        <taxon>Myomorpha</taxon>
        <taxon>Muroidea</taxon>
        <taxon>Muridae</taxon>
        <taxon>Murinae</taxon>
        <taxon>Mus</taxon>
        <taxon>Mus</taxon>
    </lineage>
</organism>
<feature type="chain" id="PRO_0000317143" description="Nucleosome assembly protein 1-like 5">
    <location>
        <begin position="1"/>
        <end position="156"/>
    </location>
</feature>
<feature type="region of interest" description="Disordered" evidence="2">
    <location>
        <begin position="1"/>
        <end position="58"/>
    </location>
</feature>
<feature type="region of interest" description="Disordered" evidence="2">
    <location>
        <begin position="120"/>
        <end position="156"/>
    </location>
</feature>
<feature type="coiled-coil region" evidence="1">
    <location>
        <begin position="68"/>
        <end position="94"/>
    </location>
</feature>
<feature type="compositionally biased region" description="Basic and acidic residues" evidence="2">
    <location>
        <begin position="1"/>
        <end position="16"/>
    </location>
</feature>
<feature type="compositionally biased region" description="Low complexity" evidence="2">
    <location>
        <begin position="34"/>
        <end position="49"/>
    </location>
</feature>
<feature type="compositionally biased region" description="Acidic residues" evidence="2">
    <location>
        <begin position="122"/>
        <end position="143"/>
    </location>
</feature>
<sequence length="156" mass="17024">MADPEKQGPAESRAEDEVMEGAQGGEDAATGDSAAAPAAEEPQAPAENAPKPKKDFMESLPNSVKCRVLALKKLQKRCDKIEAKFDKEFQALEKKYNDIYKPLLAKIQELTGEMEGCAWTLEGEDDEDDEEEDDEEEEEEEEAAAGATGGPNFAKK</sequence>
<dbReference type="EMBL" id="AB041556">
    <property type="protein sequence ID" value="BAA95041.1"/>
    <property type="molecule type" value="mRNA"/>
</dbReference>
<dbReference type="EMBL" id="BC046332">
    <property type="protein sequence ID" value="AAH46332.1"/>
    <property type="molecule type" value="mRNA"/>
</dbReference>
<dbReference type="CCDS" id="CCDS20197.1"/>
<dbReference type="RefSeq" id="NP_067407.1">
    <property type="nucleotide sequence ID" value="NM_021432.2"/>
</dbReference>
<dbReference type="SMR" id="Q9JJF0"/>
<dbReference type="BioGRID" id="208414">
    <property type="interactions" value="3"/>
</dbReference>
<dbReference type="FunCoup" id="Q9JJF0">
    <property type="interactions" value="42"/>
</dbReference>
<dbReference type="STRING" id="10090.ENSMUSP00000062780"/>
<dbReference type="iPTMnet" id="Q9JJF0"/>
<dbReference type="PhosphoSitePlus" id="Q9JJF0"/>
<dbReference type="PaxDb" id="10090-ENSMUSP00000062780"/>
<dbReference type="ProteomicsDB" id="253000"/>
<dbReference type="Antibodypedia" id="25656">
    <property type="antibodies" value="97 antibodies from 25 providers"/>
</dbReference>
<dbReference type="DNASU" id="58243"/>
<dbReference type="Ensembl" id="ENSMUST00000059539.5">
    <property type="protein sequence ID" value="ENSMUSP00000062780.4"/>
    <property type="gene ID" value="ENSMUSG00000055430.5"/>
</dbReference>
<dbReference type="GeneID" id="58243"/>
<dbReference type="KEGG" id="mmu:58243"/>
<dbReference type="UCSC" id="uc009cdg.1">
    <property type="organism name" value="mouse"/>
</dbReference>
<dbReference type="AGR" id="MGI:1923555"/>
<dbReference type="CTD" id="266812"/>
<dbReference type="MGI" id="MGI:1923555">
    <property type="gene designation" value="Nap1l5"/>
</dbReference>
<dbReference type="VEuPathDB" id="HostDB:ENSMUSG00000055430"/>
<dbReference type="eggNOG" id="KOG1507">
    <property type="taxonomic scope" value="Eukaryota"/>
</dbReference>
<dbReference type="GeneTree" id="ENSGT00730000111564"/>
<dbReference type="HOGENOM" id="CLU_133891_0_0_1"/>
<dbReference type="InParanoid" id="Q9JJF0"/>
<dbReference type="OMA" id="ATKPKND"/>
<dbReference type="OrthoDB" id="27325at2759"/>
<dbReference type="PhylomeDB" id="Q9JJF0"/>
<dbReference type="BioGRID-ORCS" id="58243">
    <property type="hits" value="4 hits in 77 CRISPR screens"/>
</dbReference>
<dbReference type="ChiTaRS" id="Nap1l5">
    <property type="organism name" value="mouse"/>
</dbReference>
<dbReference type="PRO" id="PR:Q9JJF0"/>
<dbReference type="Proteomes" id="UP000000589">
    <property type="component" value="Chromosome 6"/>
</dbReference>
<dbReference type="RNAct" id="Q9JJF0">
    <property type="molecule type" value="protein"/>
</dbReference>
<dbReference type="Bgee" id="ENSMUSG00000055430">
    <property type="expression patterns" value="Expressed in dorsomedial nucleus of hypothalamus and 176 other cell types or tissues"/>
</dbReference>
<dbReference type="ExpressionAtlas" id="Q9JJF0">
    <property type="expression patterns" value="baseline and differential"/>
</dbReference>
<dbReference type="GO" id="GO:0005634">
    <property type="term" value="C:nucleus"/>
    <property type="evidence" value="ECO:0007669"/>
    <property type="project" value="UniProtKB-SubCell"/>
</dbReference>
<dbReference type="GO" id="GO:0006334">
    <property type="term" value="P:nucleosome assembly"/>
    <property type="evidence" value="ECO:0007669"/>
    <property type="project" value="InterPro"/>
</dbReference>
<dbReference type="FunFam" id="1.20.5.1500:FF:000001">
    <property type="entry name" value="Nucleosome assembly protein 1-like 1"/>
    <property type="match status" value="1"/>
</dbReference>
<dbReference type="Gene3D" id="1.20.5.1500">
    <property type="match status" value="1"/>
</dbReference>
<dbReference type="InterPro" id="IPR037231">
    <property type="entry name" value="NAP-like_sf"/>
</dbReference>
<dbReference type="InterPro" id="IPR002164">
    <property type="entry name" value="NAP_family"/>
</dbReference>
<dbReference type="PANTHER" id="PTHR11875">
    <property type="entry name" value="TESTIS-SPECIFIC Y-ENCODED PROTEIN"/>
    <property type="match status" value="1"/>
</dbReference>
<dbReference type="Pfam" id="PF00956">
    <property type="entry name" value="NAP"/>
    <property type="match status" value="1"/>
</dbReference>
<dbReference type="SUPFAM" id="SSF143113">
    <property type="entry name" value="NAP-like"/>
    <property type="match status" value="1"/>
</dbReference>